<protein>
    <recommendedName>
        <fullName evidence="1">Outer membrane protein assembly factor BamE</fullName>
    </recommendedName>
</protein>
<accession>F0KFM4</accession>
<proteinExistence type="inferred from homology"/>
<sequence>MQKLVLTLLVTSLLAGCSIFGVYKVDIPQGTPLTKAQASQVQVGMNFQQVRFLLGSPTVTDPLNPLRWDYIYNYIPGTYAKKAKIPAAHGQHLKIYFDGTGTVTKIEGLETIPESQPGLPASKEAILTAPPL</sequence>
<feature type="signal peptide" evidence="1">
    <location>
        <begin position="1"/>
        <end position="16"/>
    </location>
</feature>
<feature type="chain" id="PRO_0000417863" description="Outer membrane protein assembly factor BamE">
    <location>
        <begin position="17"/>
        <end position="132"/>
    </location>
</feature>
<feature type="lipid moiety-binding region" description="N-palmitoyl cysteine" evidence="1">
    <location>
        <position position="17"/>
    </location>
</feature>
<feature type="lipid moiety-binding region" description="S-diacylglycerol cysteine" evidence="1">
    <location>
        <position position="17"/>
    </location>
</feature>
<keyword id="KW-0998">Cell outer membrane</keyword>
<keyword id="KW-0449">Lipoprotein</keyword>
<keyword id="KW-0472">Membrane</keyword>
<keyword id="KW-0564">Palmitate</keyword>
<keyword id="KW-1185">Reference proteome</keyword>
<keyword id="KW-0732">Signal</keyword>
<evidence type="ECO:0000255" key="1">
    <source>
        <dbReference type="HAMAP-Rule" id="MF_00925"/>
    </source>
</evidence>
<name>BAME_ACIP2</name>
<gene>
    <name evidence="1" type="primary">bamE</name>
    <name type="synonym">omlA</name>
    <name type="ordered locus">BDGL_000158</name>
</gene>
<organism>
    <name type="scientific">Acinetobacter pittii (strain PHEA-2)</name>
    <dbReference type="NCBI Taxonomy" id="871585"/>
    <lineage>
        <taxon>Bacteria</taxon>
        <taxon>Pseudomonadati</taxon>
        <taxon>Pseudomonadota</taxon>
        <taxon>Gammaproteobacteria</taxon>
        <taxon>Moraxellales</taxon>
        <taxon>Moraxellaceae</taxon>
        <taxon>Acinetobacter</taxon>
        <taxon>Acinetobacter calcoaceticus/baumannii complex</taxon>
    </lineage>
</organism>
<dbReference type="EMBL" id="CP002177">
    <property type="protein sequence ID" value="ADY80744.1"/>
    <property type="molecule type" value="Genomic_DNA"/>
</dbReference>
<dbReference type="RefSeq" id="WP_002121740.1">
    <property type="nucleotide sequence ID" value="NC_016603.1"/>
</dbReference>
<dbReference type="RefSeq" id="YP_004994426.1">
    <property type="nucleotide sequence ID" value="NC_016603.1"/>
</dbReference>
<dbReference type="SMR" id="F0KFM4"/>
<dbReference type="STRING" id="871585.BDGL_000158"/>
<dbReference type="GeneID" id="11638334"/>
<dbReference type="KEGG" id="acc:BDGL_000158"/>
<dbReference type="PATRIC" id="fig|871585.3.peg.157"/>
<dbReference type="eggNOG" id="COG2913">
    <property type="taxonomic scope" value="Bacteria"/>
</dbReference>
<dbReference type="HOGENOM" id="CLU_083835_3_2_6"/>
<dbReference type="OrthoDB" id="9808250at2"/>
<dbReference type="Proteomes" id="UP000007477">
    <property type="component" value="Chromosome"/>
</dbReference>
<dbReference type="GO" id="GO:1990063">
    <property type="term" value="C:Bam protein complex"/>
    <property type="evidence" value="ECO:0007669"/>
    <property type="project" value="TreeGrafter"/>
</dbReference>
<dbReference type="GO" id="GO:0030674">
    <property type="term" value="F:protein-macromolecule adaptor activity"/>
    <property type="evidence" value="ECO:0007669"/>
    <property type="project" value="TreeGrafter"/>
</dbReference>
<dbReference type="GO" id="GO:0043165">
    <property type="term" value="P:Gram-negative-bacterium-type cell outer membrane assembly"/>
    <property type="evidence" value="ECO:0007669"/>
    <property type="project" value="UniProtKB-UniRule"/>
</dbReference>
<dbReference type="GO" id="GO:0051205">
    <property type="term" value="P:protein insertion into membrane"/>
    <property type="evidence" value="ECO:0007669"/>
    <property type="project" value="UniProtKB-UniRule"/>
</dbReference>
<dbReference type="Gene3D" id="3.30.1450.10">
    <property type="match status" value="1"/>
</dbReference>
<dbReference type="HAMAP" id="MF_00925">
    <property type="entry name" value="OM_assembly_BamE"/>
    <property type="match status" value="1"/>
</dbReference>
<dbReference type="InterPro" id="IPR026592">
    <property type="entry name" value="BamE"/>
</dbReference>
<dbReference type="InterPro" id="IPR037873">
    <property type="entry name" value="BamE-like"/>
</dbReference>
<dbReference type="InterPro" id="IPR007450">
    <property type="entry name" value="BamE_dom"/>
</dbReference>
<dbReference type="PANTHER" id="PTHR37482">
    <property type="entry name" value="OUTER MEMBRANE PROTEIN ASSEMBLY FACTOR BAME"/>
    <property type="match status" value="1"/>
</dbReference>
<dbReference type="PANTHER" id="PTHR37482:SF1">
    <property type="entry name" value="OUTER MEMBRANE PROTEIN ASSEMBLY FACTOR BAME"/>
    <property type="match status" value="1"/>
</dbReference>
<dbReference type="Pfam" id="PF04355">
    <property type="entry name" value="BamE"/>
    <property type="match status" value="1"/>
</dbReference>
<dbReference type="PROSITE" id="PS51257">
    <property type="entry name" value="PROKAR_LIPOPROTEIN"/>
    <property type="match status" value="1"/>
</dbReference>
<comment type="function">
    <text evidence="1">Part of the outer membrane protein assembly complex, which is involved in assembly and insertion of beta-barrel proteins into the outer membrane.</text>
</comment>
<comment type="subunit">
    <text evidence="1">Part of the Bam complex.</text>
</comment>
<comment type="subcellular location">
    <subcellularLocation>
        <location evidence="1">Cell outer membrane</location>
        <topology evidence="1">Lipid-anchor</topology>
    </subcellularLocation>
</comment>
<comment type="similarity">
    <text evidence="1">Belongs to the BamE family.</text>
</comment>
<reference key="1">
    <citation type="journal article" date="2011" name="J. Bacteriol.">
        <title>Genome sequence of Acinetobacter calcoaceticus PHEA-2, isolated from industry wastewater.</title>
        <authorList>
            <person name="Zhan Y."/>
            <person name="Yan Y."/>
            <person name="Zhang W."/>
            <person name="Yu H."/>
            <person name="Chen M."/>
            <person name="Lu W."/>
            <person name="Ping S."/>
            <person name="Peng Z."/>
            <person name="Yuan M."/>
            <person name="Zhou Z."/>
            <person name="Elmerich C."/>
            <person name="Lin M."/>
        </authorList>
    </citation>
    <scope>NUCLEOTIDE SEQUENCE [LARGE SCALE GENOMIC DNA]</scope>
    <source>
        <strain>PHEA-2</strain>
    </source>
</reference>